<organism>
    <name type="scientific">Chromohalobacter salexigens (strain ATCC BAA-138 / DSM 3043 / CIP 106854 / NCIMB 13768 / 1H11)</name>
    <dbReference type="NCBI Taxonomy" id="290398"/>
    <lineage>
        <taxon>Bacteria</taxon>
        <taxon>Pseudomonadati</taxon>
        <taxon>Pseudomonadota</taxon>
        <taxon>Gammaproteobacteria</taxon>
        <taxon>Oceanospirillales</taxon>
        <taxon>Halomonadaceae</taxon>
        <taxon>Chromohalobacter</taxon>
    </lineage>
</organism>
<proteinExistence type="inferred from homology"/>
<gene>
    <name evidence="1" type="primary">fabV</name>
    <name type="ordered locus">Csal_2823</name>
</gene>
<dbReference type="EC" id="1.3.1.9" evidence="1"/>
<dbReference type="EMBL" id="CP000285">
    <property type="protein sequence ID" value="ABE60169.1"/>
    <property type="molecule type" value="Genomic_DNA"/>
</dbReference>
<dbReference type="RefSeq" id="WP_011508115.1">
    <property type="nucleotide sequence ID" value="NC_007963.1"/>
</dbReference>
<dbReference type="SMR" id="Q1QTN9"/>
<dbReference type="STRING" id="290398.Csal_2823"/>
<dbReference type="GeneID" id="95335517"/>
<dbReference type="KEGG" id="csa:Csal_2823"/>
<dbReference type="eggNOG" id="COG3007">
    <property type="taxonomic scope" value="Bacteria"/>
</dbReference>
<dbReference type="HOGENOM" id="CLU_057698_1_0_6"/>
<dbReference type="OrthoDB" id="9802260at2"/>
<dbReference type="UniPathway" id="UPA00094"/>
<dbReference type="Proteomes" id="UP000000239">
    <property type="component" value="Chromosome"/>
</dbReference>
<dbReference type="GO" id="GO:0004318">
    <property type="term" value="F:enoyl-[acyl-carrier-protein] reductase (NADH) activity"/>
    <property type="evidence" value="ECO:0007669"/>
    <property type="project" value="UniProtKB-UniRule"/>
</dbReference>
<dbReference type="GO" id="GO:0051287">
    <property type="term" value="F:NAD binding"/>
    <property type="evidence" value="ECO:0007669"/>
    <property type="project" value="UniProtKB-UniRule"/>
</dbReference>
<dbReference type="GO" id="GO:0050343">
    <property type="term" value="F:trans-2-enoyl-CoA reductase (NADH) activity"/>
    <property type="evidence" value="ECO:0007669"/>
    <property type="project" value="TreeGrafter"/>
</dbReference>
<dbReference type="GO" id="GO:0006633">
    <property type="term" value="P:fatty acid biosynthetic process"/>
    <property type="evidence" value="ECO:0007669"/>
    <property type="project" value="UniProtKB-UniRule"/>
</dbReference>
<dbReference type="FunFam" id="3.40.50.720:FF:000221">
    <property type="entry name" value="Enoyl-[acyl-carrier-protein] reductase [NADH]"/>
    <property type="match status" value="1"/>
</dbReference>
<dbReference type="Gene3D" id="3.40.50.720">
    <property type="entry name" value="NAD(P)-binding Rossmann-like Domain"/>
    <property type="match status" value="1"/>
</dbReference>
<dbReference type="HAMAP" id="MF_01838">
    <property type="entry name" value="FabV_reductase"/>
    <property type="match status" value="1"/>
</dbReference>
<dbReference type="InterPro" id="IPR024906">
    <property type="entry name" value="Eno_Rdtase_FAD-bd_dom"/>
</dbReference>
<dbReference type="InterPro" id="IPR024910">
    <property type="entry name" value="Enoyl-CoA_Rdtase_cat_dom"/>
</dbReference>
<dbReference type="InterPro" id="IPR050048">
    <property type="entry name" value="FabV-like_NADH_b"/>
</dbReference>
<dbReference type="InterPro" id="IPR036291">
    <property type="entry name" value="NAD(P)-bd_dom_sf"/>
</dbReference>
<dbReference type="InterPro" id="IPR010758">
    <property type="entry name" value="Trans-2-enoyl-CoA_reductase"/>
</dbReference>
<dbReference type="NCBIfam" id="NF043048">
    <property type="entry name" value="EnoyACPredFabV"/>
    <property type="match status" value="1"/>
</dbReference>
<dbReference type="NCBIfam" id="NF010177">
    <property type="entry name" value="PRK13656.1"/>
    <property type="match status" value="1"/>
</dbReference>
<dbReference type="PANTHER" id="PTHR37480">
    <property type="entry name" value="ENOYL-[ACYL-CARRIER-PROTEIN] REDUCTASE [NADH]"/>
    <property type="match status" value="1"/>
</dbReference>
<dbReference type="PANTHER" id="PTHR37480:SF1">
    <property type="entry name" value="ENOYL-[ACYL-CARRIER-PROTEIN] REDUCTASE [NADH]"/>
    <property type="match status" value="1"/>
</dbReference>
<dbReference type="Pfam" id="PF07055">
    <property type="entry name" value="Eno-Rase_FAD_bd"/>
    <property type="match status" value="1"/>
</dbReference>
<dbReference type="Pfam" id="PF12242">
    <property type="entry name" value="Eno-Rase_NADH_b"/>
    <property type="match status" value="1"/>
</dbReference>
<dbReference type="Pfam" id="PF12241">
    <property type="entry name" value="Enoyl_reductase"/>
    <property type="match status" value="1"/>
</dbReference>
<dbReference type="SUPFAM" id="SSF51735">
    <property type="entry name" value="NAD(P)-binding Rossmann-fold domains"/>
    <property type="match status" value="1"/>
</dbReference>
<keyword id="KW-0275">Fatty acid biosynthesis</keyword>
<keyword id="KW-0276">Fatty acid metabolism</keyword>
<keyword id="KW-0444">Lipid biosynthesis</keyword>
<keyword id="KW-0443">Lipid metabolism</keyword>
<keyword id="KW-0520">NAD</keyword>
<keyword id="KW-0560">Oxidoreductase</keyword>
<keyword id="KW-1185">Reference proteome</keyword>
<protein>
    <recommendedName>
        <fullName evidence="1">Enoyl-[acyl-carrier-protein] reductase [NADH]</fullName>
        <shortName evidence="1">ENR</shortName>
        <ecNumber evidence="1">1.3.1.9</ecNumber>
    </recommendedName>
</protein>
<comment type="function">
    <text evidence="1">Involved in the final reduction of the elongation cycle of fatty acid synthesis (FAS II). Catalyzes the reduction of a carbon-carbon double bond in an enoyl moiety that is covalently linked to an acyl carrier protein (ACP).</text>
</comment>
<comment type="catalytic activity">
    <reaction evidence="1">
        <text>a 2,3-saturated acyl-[ACP] + NAD(+) = a (2E)-enoyl-[ACP] + NADH + H(+)</text>
        <dbReference type="Rhea" id="RHEA:10240"/>
        <dbReference type="Rhea" id="RHEA-COMP:9925"/>
        <dbReference type="Rhea" id="RHEA-COMP:9926"/>
        <dbReference type="ChEBI" id="CHEBI:15378"/>
        <dbReference type="ChEBI" id="CHEBI:57540"/>
        <dbReference type="ChEBI" id="CHEBI:57945"/>
        <dbReference type="ChEBI" id="CHEBI:78784"/>
        <dbReference type="ChEBI" id="CHEBI:78785"/>
        <dbReference type="EC" id="1.3.1.9"/>
    </reaction>
</comment>
<comment type="pathway">
    <text evidence="1">Lipid metabolism; fatty acid biosynthesis.</text>
</comment>
<comment type="subunit">
    <text evidence="1">Monomer.</text>
</comment>
<comment type="similarity">
    <text evidence="1">Belongs to the TER reductase family.</text>
</comment>
<feature type="chain" id="PRO_1000070479" description="Enoyl-[acyl-carrier-protein] reductase [NADH]">
    <location>
        <begin position="1"/>
        <end position="405"/>
    </location>
</feature>
<feature type="active site" description="Proton donor" evidence="1">
    <location>
        <position position="238"/>
    </location>
</feature>
<feature type="binding site" evidence="1">
    <location>
        <begin position="51"/>
        <end position="56"/>
    </location>
    <ligand>
        <name>NAD(+)</name>
        <dbReference type="ChEBI" id="CHEBI:57540"/>
    </ligand>
</feature>
<feature type="binding site" evidence="1">
    <location>
        <begin position="77"/>
        <end position="78"/>
    </location>
    <ligand>
        <name>NAD(+)</name>
        <dbReference type="ChEBI" id="CHEBI:57540"/>
    </ligand>
</feature>
<feature type="binding site" evidence="1">
    <location>
        <begin position="114"/>
        <end position="115"/>
    </location>
    <ligand>
        <name>NAD(+)</name>
        <dbReference type="ChEBI" id="CHEBI:57540"/>
    </ligand>
</feature>
<feature type="binding site" evidence="1">
    <location>
        <begin position="142"/>
        <end position="143"/>
    </location>
    <ligand>
        <name>NAD(+)</name>
        <dbReference type="ChEBI" id="CHEBI:57540"/>
    </ligand>
</feature>
<feature type="binding site" evidence="1">
    <location>
        <position position="228"/>
    </location>
    <ligand>
        <name>substrate</name>
    </ligand>
</feature>
<feature type="binding site" evidence="1">
    <location>
        <position position="247"/>
    </location>
    <ligand>
        <name>NAD(+)</name>
        <dbReference type="ChEBI" id="CHEBI:57540"/>
    </ligand>
</feature>
<feature type="binding site" evidence="1">
    <location>
        <begin position="276"/>
        <end position="278"/>
    </location>
    <ligand>
        <name>NAD(+)</name>
        <dbReference type="ChEBI" id="CHEBI:57540"/>
    </ligand>
</feature>
<feature type="site" description="Plays an important role in discriminating NADH against NADPH" evidence="1">
    <location>
        <position position="78"/>
    </location>
</feature>
<reference key="1">
    <citation type="journal article" date="2011" name="Stand. Genomic Sci.">
        <title>Complete genome sequence of the halophilic and highly halotolerant Chromohalobacter salexigens type strain (1H11(T)).</title>
        <authorList>
            <person name="Copeland A."/>
            <person name="O'Connor K."/>
            <person name="Lucas S."/>
            <person name="Lapidus A."/>
            <person name="Berry K.W."/>
            <person name="Detter J.C."/>
            <person name="Del Rio T.G."/>
            <person name="Hammon N."/>
            <person name="Dalin E."/>
            <person name="Tice H."/>
            <person name="Pitluck S."/>
            <person name="Bruce D."/>
            <person name="Goodwin L."/>
            <person name="Han C."/>
            <person name="Tapia R."/>
            <person name="Saunders E."/>
            <person name="Schmutz J."/>
            <person name="Brettin T."/>
            <person name="Larimer F."/>
            <person name="Land M."/>
            <person name="Hauser L."/>
            <person name="Vargas C."/>
            <person name="Nieto J.J."/>
            <person name="Kyrpides N.C."/>
            <person name="Ivanova N."/>
            <person name="Goker M."/>
            <person name="Klenk H.P."/>
            <person name="Csonka L.N."/>
            <person name="Woyke T."/>
        </authorList>
    </citation>
    <scope>NUCLEOTIDE SEQUENCE [LARGE SCALE GENOMIC DNA]</scope>
    <source>
        <strain>ATCC BAA-138 / DSM 3043 / CIP 106854 / NCIMB 13768 / 1H11</strain>
    </source>
</reference>
<name>FABV_CHRSD</name>
<accession>Q1QTN9</accession>
<sequence>MIIKPKVRGFICTTTHPLGCERNVAEQIATTRANIPESERDKGPKNVLVIGASSGYGLAARVTAAFGYGASTLGVFFEKPGTEKKPGTAGWYNAAAFDKFAKAEGLYSKAINGDAFSHEAREKAIELIKQDMGQIDLVVYSLASPVRKLPDSGELKRSALKPIGETYTATAIDTNKDAIVEASVEPATEEEIADTVTVMGGEDWELWVDALDKAGVLAPGARSVAFSYIGTEITWPIYWHGALGKAKEDLDRAAGELDARLGQHGGGANVAVLKSVVTQASAAIPVMPLYISMVYKVMKEQGLHEGTIDQLNRLYRERLYSTQGQNGELATDEAGRLRLDDWELRDDVQQACQDLWPQVTTENLFTLTDYAGYKREFLKLFGFERDDVDYEADVDPVAEFDVVQL</sequence>
<evidence type="ECO:0000255" key="1">
    <source>
        <dbReference type="HAMAP-Rule" id="MF_01838"/>
    </source>
</evidence>